<name>KAD2_MALGO</name>
<dbReference type="EC" id="2.7.4.3" evidence="1"/>
<dbReference type="EMBL" id="AAYY01000001">
    <property type="protein sequence ID" value="EDP45584.1"/>
    <property type="molecule type" value="Genomic_DNA"/>
</dbReference>
<dbReference type="RefSeq" id="XP_001732798.1">
    <property type="nucleotide sequence ID" value="XM_001732746.1"/>
</dbReference>
<dbReference type="SMR" id="A8PR17"/>
<dbReference type="FunCoup" id="A8PR17">
    <property type="interactions" value="459"/>
</dbReference>
<dbReference type="STRING" id="425265.A8PR17"/>
<dbReference type="GeneID" id="5857104"/>
<dbReference type="KEGG" id="mgl:MGL_0573"/>
<dbReference type="VEuPathDB" id="FungiDB:MGL_0573"/>
<dbReference type="InParanoid" id="A8PR17"/>
<dbReference type="OMA" id="VYHEQTA"/>
<dbReference type="OrthoDB" id="439792at2759"/>
<dbReference type="Proteomes" id="UP000008837">
    <property type="component" value="Unassembled WGS sequence"/>
</dbReference>
<dbReference type="GO" id="GO:0005829">
    <property type="term" value="C:cytosol"/>
    <property type="evidence" value="ECO:0007669"/>
    <property type="project" value="UniProtKB-SubCell"/>
</dbReference>
<dbReference type="GO" id="GO:0005758">
    <property type="term" value="C:mitochondrial intermembrane space"/>
    <property type="evidence" value="ECO:0007669"/>
    <property type="project" value="UniProtKB-SubCell"/>
</dbReference>
<dbReference type="GO" id="GO:0004017">
    <property type="term" value="F:adenylate kinase activity"/>
    <property type="evidence" value="ECO:0007669"/>
    <property type="project" value="UniProtKB-UniRule"/>
</dbReference>
<dbReference type="GO" id="GO:0005524">
    <property type="term" value="F:ATP binding"/>
    <property type="evidence" value="ECO:0007669"/>
    <property type="project" value="UniProtKB-KW"/>
</dbReference>
<dbReference type="GO" id="GO:0006172">
    <property type="term" value="P:ADP biosynthetic process"/>
    <property type="evidence" value="ECO:0007669"/>
    <property type="project" value="UniProtKB-UniRule"/>
</dbReference>
<dbReference type="GO" id="GO:0046033">
    <property type="term" value="P:AMP metabolic process"/>
    <property type="evidence" value="ECO:0007669"/>
    <property type="project" value="UniProtKB-UniRule"/>
</dbReference>
<dbReference type="GO" id="GO:0046034">
    <property type="term" value="P:ATP metabolic process"/>
    <property type="evidence" value="ECO:0007669"/>
    <property type="project" value="UniProtKB-UniRule"/>
</dbReference>
<dbReference type="CDD" id="cd01428">
    <property type="entry name" value="ADK"/>
    <property type="match status" value="1"/>
</dbReference>
<dbReference type="FunFam" id="3.40.50.300:FF:000106">
    <property type="entry name" value="Adenylate kinase mitochondrial"/>
    <property type="match status" value="1"/>
</dbReference>
<dbReference type="Gene3D" id="3.40.50.300">
    <property type="entry name" value="P-loop containing nucleotide triphosphate hydrolases"/>
    <property type="match status" value="1"/>
</dbReference>
<dbReference type="HAMAP" id="MF_00235">
    <property type="entry name" value="Adenylate_kinase_Adk"/>
    <property type="match status" value="1"/>
</dbReference>
<dbReference type="HAMAP" id="MF_03168">
    <property type="entry name" value="Adenylate_kinase_AK2"/>
    <property type="match status" value="1"/>
</dbReference>
<dbReference type="InterPro" id="IPR006259">
    <property type="entry name" value="Adenyl_kin_sub"/>
</dbReference>
<dbReference type="InterPro" id="IPR000850">
    <property type="entry name" value="Adenylat/UMP-CMP_kin"/>
</dbReference>
<dbReference type="InterPro" id="IPR033690">
    <property type="entry name" value="Adenylat_kinase_CS"/>
</dbReference>
<dbReference type="InterPro" id="IPR007862">
    <property type="entry name" value="Adenylate_kinase_lid-dom"/>
</dbReference>
<dbReference type="InterPro" id="IPR036193">
    <property type="entry name" value="ADK_active_lid_dom_sf"/>
</dbReference>
<dbReference type="InterPro" id="IPR028587">
    <property type="entry name" value="AK2"/>
</dbReference>
<dbReference type="InterPro" id="IPR027417">
    <property type="entry name" value="P-loop_NTPase"/>
</dbReference>
<dbReference type="NCBIfam" id="TIGR01351">
    <property type="entry name" value="adk"/>
    <property type="match status" value="1"/>
</dbReference>
<dbReference type="NCBIfam" id="NF001380">
    <property type="entry name" value="PRK00279.1-2"/>
    <property type="match status" value="1"/>
</dbReference>
<dbReference type="NCBIfam" id="NF001381">
    <property type="entry name" value="PRK00279.1-3"/>
    <property type="match status" value="1"/>
</dbReference>
<dbReference type="NCBIfam" id="NF011100">
    <property type="entry name" value="PRK14527.1"/>
    <property type="match status" value="1"/>
</dbReference>
<dbReference type="PANTHER" id="PTHR23359">
    <property type="entry name" value="NUCLEOTIDE KINASE"/>
    <property type="match status" value="1"/>
</dbReference>
<dbReference type="Pfam" id="PF00406">
    <property type="entry name" value="ADK"/>
    <property type="match status" value="1"/>
</dbReference>
<dbReference type="Pfam" id="PF05191">
    <property type="entry name" value="ADK_lid"/>
    <property type="match status" value="1"/>
</dbReference>
<dbReference type="PRINTS" id="PR00094">
    <property type="entry name" value="ADENYLTKNASE"/>
</dbReference>
<dbReference type="SUPFAM" id="SSF57774">
    <property type="entry name" value="Microbial and mitochondrial ADK, insert 'zinc finger' domain"/>
    <property type="match status" value="1"/>
</dbReference>
<dbReference type="SUPFAM" id="SSF52540">
    <property type="entry name" value="P-loop containing nucleoside triphosphate hydrolases"/>
    <property type="match status" value="1"/>
</dbReference>
<dbReference type="PROSITE" id="PS00113">
    <property type="entry name" value="ADENYLATE_KINASE"/>
    <property type="match status" value="1"/>
</dbReference>
<proteinExistence type="inferred from homology"/>
<reference key="1">
    <citation type="journal article" date="2007" name="Proc. Natl. Acad. Sci. U.S.A.">
        <title>Dandruff-associated Malassezia genomes reveal convergent and divergent virulence traits shared with plant and human fungal pathogens.</title>
        <authorList>
            <person name="Xu J."/>
            <person name="Saunders C.W."/>
            <person name="Hu P."/>
            <person name="Grant R.A."/>
            <person name="Boekhout T."/>
            <person name="Kuramae E.E."/>
            <person name="Kronstad J.W."/>
            <person name="DeAngelis Y.M."/>
            <person name="Reeder N.L."/>
            <person name="Johnstone K.R."/>
            <person name="Leland M."/>
            <person name="Fieno A.M."/>
            <person name="Begley W.M."/>
            <person name="Sun Y."/>
            <person name="Lacey M.P."/>
            <person name="Chaudhary T."/>
            <person name="Keough T."/>
            <person name="Chu L."/>
            <person name="Sears R."/>
            <person name="Yuan B."/>
            <person name="Dawson T.L. Jr."/>
        </authorList>
    </citation>
    <scope>NUCLEOTIDE SEQUENCE [LARGE SCALE GENOMIC DNA]</scope>
    <source>
        <strain>ATCC MYA-4612 / CBS 7966</strain>
    </source>
</reference>
<organism>
    <name type="scientific">Malassezia globosa (strain ATCC MYA-4612 / CBS 7966)</name>
    <name type="common">Dandruff-associated fungus</name>
    <dbReference type="NCBI Taxonomy" id="425265"/>
    <lineage>
        <taxon>Eukaryota</taxon>
        <taxon>Fungi</taxon>
        <taxon>Dikarya</taxon>
        <taxon>Basidiomycota</taxon>
        <taxon>Ustilaginomycotina</taxon>
        <taxon>Malasseziomycetes</taxon>
        <taxon>Malasseziales</taxon>
        <taxon>Malasseziaceae</taxon>
        <taxon>Malassezia</taxon>
    </lineage>
</organism>
<comment type="function">
    <text evidence="1">Catalyzes the reversible transfer of the terminal phosphate group between ATP and AMP. Plays an important role in cellular energy homeostasis and in adenine nucleotide metabolism. Adenylate kinase activity is critical for regulation of the phosphate utilization and the AMP de novo biosynthesis pathways.</text>
</comment>
<comment type="catalytic activity">
    <reaction evidence="1">
        <text>AMP + ATP = 2 ADP</text>
        <dbReference type="Rhea" id="RHEA:12973"/>
        <dbReference type="ChEBI" id="CHEBI:30616"/>
        <dbReference type="ChEBI" id="CHEBI:456215"/>
        <dbReference type="ChEBI" id="CHEBI:456216"/>
        <dbReference type="EC" id="2.7.4.3"/>
    </reaction>
</comment>
<comment type="subunit">
    <text evidence="1">Monomer.</text>
</comment>
<comment type="subcellular location">
    <subcellularLocation>
        <location evidence="1">Cytoplasm</location>
        <location evidence="1">Cytosol</location>
    </subcellularLocation>
    <subcellularLocation>
        <location evidence="1">Mitochondrion intermembrane space</location>
    </subcellularLocation>
    <text evidence="1">Predominantly mitochondrial.</text>
</comment>
<comment type="domain">
    <text evidence="1">Consists of three domains, a large central CORE domain and two small peripheral domains, NMPbind and LID, which undergo movements during catalysis. The LID domain closes over the site of phosphoryl transfer upon ATP binding. Assembling and dissambling the active center during each catalytic cycle provides an effective means to prevent ATP hydrolysis.</text>
</comment>
<comment type="similarity">
    <text evidence="1">Belongs to the adenylate kinase family. AK2 subfamily.</text>
</comment>
<sequence length="256" mass="28329">MSNPANTELSYLKSLVNELNEKIAVLEGKAPANQGVRMVLVGPPGAGKGTQAPKILERFQNMVCHLATGDLLRQQVAMGTDLGKQAKKIMDQGALVSDEIMVGMIKDQLETNRSCKKGFILDGFPRTTPQAEKLDQMLSDRKQKLDHVIELQIPDELLISRITGRLIHPGSGRSYHKIFSPPKQPMKDDITGEPLVQRSDDNEEALRKRLATYHKQTTAVTDYYKKHGIWSPIDATQSPNTVWQSISAIFNNGASA</sequence>
<protein>
    <recommendedName>
        <fullName evidence="1">Adenylate kinase</fullName>
        <ecNumber evidence="1">2.7.4.3</ecNumber>
    </recommendedName>
    <alternativeName>
        <fullName evidence="1">ATP-AMP transphosphorylase</fullName>
    </alternativeName>
    <alternativeName>
        <fullName evidence="1">ATP:AMP phosphotransferase</fullName>
    </alternativeName>
    <alternativeName>
        <fullName evidence="1">Adenylate kinase cytosolic and mitochondrial</fullName>
    </alternativeName>
    <alternativeName>
        <fullName evidence="1">Adenylate monophosphate kinase</fullName>
    </alternativeName>
</protein>
<feature type="chain" id="PRO_0000365679" description="Adenylate kinase">
    <location>
        <begin position="1"/>
        <end position="256"/>
    </location>
</feature>
<feature type="region of interest" description="NMP" evidence="1">
    <location>
        <begin position="67"/>
        <end position="96"/>
    </location>
</feature>
<feature type="region of interest" description="LID" evidence="1">
    <location>
        <begin position="164"/>
        <end position="201"/>
    </location>
</feature>
<feature type="binding site" evidence="1">
    <location>
        <begin position="45"/>
        <end position="50"/>
    </location>
    <ligand>
        <name>ATP</name>
        <dbReference type="ChEBI" id="CHEBI:30616"/>
    </ligand>
</feature>
<feature type="binding site" evidence="1">
    <location>
        <position position="68"/>
    </location>
    <ligand>
        <name>AMP</name>
        <dbReference type="ChEBI" id="CHEBI:456215"/>
    </ligand>
</feature>
<feature type="binding site" evidence="1">
    <location>
        <position position="73"/>
    </location>
    <ligand>
        <name>AMP</name>
        <dbReference type="ChEBI" id="CHEBI:456215"/>
    </ligand>
</feature>
<feature type="binding site" evidence="1">
    <location>
        <begin position="94"/>
        <end position="96"/>
    </location>
    <ligand>
        <name>AMP</name>
        <dbReference type="ChEBI" id="CHEBI:456215"/>
    </ligand>
</feature>
<feature type="binding site" evidence="1">
    <location>
        <begin position="123"/>
        <end position="126"/>
    </location>
    <ligand>
        <name>AMP</name>
        <dbReference type="ChEBI" id="CHEBI:456215"/>
    </ligand>
</feature>
<feature type="binding site" evidence="1">
    <location>
        <position position="130"/>
    </location>
    <ligand>
        <name>AMP</name>
        <dbReference type="ChEBI" id="CHEBI:456215"/>
    </ligand>
</feature>
<feature type="binding site" evidence="1">
    <location>
        <position position="165"/>
    </location>
    <ligand>
        <name>ATP</name>
        <dbReference type="ChEBI" id="CHEBI:30616"/>
    </ligand>
</feature>
<feature type="binding site" evidence="1">
    <location>
        <begin position="174"/>
        <end position="175"/>
    </location>
    <ligand>
        <name>ATP</name>
        <dbReference type="ChEBI" id="CHEBI:30616"/>
    </ligand>
</feature>
<feature type="binding site" evidence="1">
    <location>
        <position position="198"/>
    </location>
    <ligand>
        <name>AMP</name>
        <dbReference type="ChEBI" id="CHEBI:456215"/>
    </ligand>
</feature>
<feature type="binding site" evidence="1">
    <location>
        <position position="209"/>
    </location>
    <ligand>
        <name>AMP</name>
        <dbReference type="ChEBI" id="CHEBI:456215"/>
    </ligand>
</feature>
<feature type="binding site" evidence="1">
    <location>
        <position position="237"/>
    </location>
    <ligand>
        <name>ATP</name>
        <dbReference type="ChEBI" id="CHEBI:30616"/>
    </ligand>
</feature>
<keyword id="KW-0067">ATP-binding</keyword>
<keyword id="KW-0963">Cytoplasm</keyword>
<keyword id="KW-0418">Kinase</keyword>
<keyword id="KW-0496">Mitochondrion</keyword>
<keyword id="KW-0547">Nucleotide-binding</keyword>
<keyword id="KW-1185">Reference proteome</keyword>
<keyword id="KW-0808">Transferase</keyword>
<accession>A8PR17</accession>
<gene>
    <name evidence="1" type="primary">ADK1</name>
    <name type="ORF">MGL_0573</name>
</gene>
<evidence type="ECO:0000255" key="1">
    <source>
        <dbReference type="HAMAP-Rule" id="MF_03168"/>
    </source>
</evidence>